<comment type="function">
    <text evidence="1">Bifunctional enzyme with both ATP sulfurylase and APS kinase activity, which mediates two steps in the sulfate activation pathway. The first step is the transfer of a sulfate group to ATP to yield adenosine 5'-phosphosulfate (APS), and the second step is the transfer of a phosphate group from ATP to APS yielding 3'-phosphoadenylylsulfate (PAPS: activated sulfate donor used by sulfotransferase). In mammals, PAPS is the sole source of sulfate; APS appears to be only an intermediate in the sulfate-activation pathway. Required for normal biosynthesis of sulfated L-selectin ligands in endothelial cells.</text>
</comment>
<comment type="catalytic activity">
    <reaction evidence="1">
        <text>sulfate + ATP + H(+) = adenosine 5'-phosphosulfate + diphosphate</text>
        <dbReference type="Rhea" id="RHEA:18133"/>
        <dbReference type="ChEBI" id="CHEBI:15378"/>
        <dbReference type="ChEBI" id="CHEBI:16189"/>
        <dbReference type="ChEBI" id="CHEBI:30616"/>
        <dbReference type="ChEBI" id="CHEBI:33019"/>
        <dbReference type="ChEBI" id="CHEBI:58243"/>
        <dbReference type="EC" id="2.7.7.4"/>
    </reaction>
</comment>
<comment type="catalytic activity">
    <reaction evidence="1">
        <text>adenosine 5'-phosphosulfate + ATP = 3'-phosphoadenylyl sulfate + ADP + H(+)</text>
        <dbReference type="Rhea" id="RHEA:24152"/>
        <dbReference type="ChEBI" id="CHEBI:15378"/>
        <dbReference type="ChEBI" id="CHEBI:30616"/>
        <dbReference type="ChEBI" id="CHEBI:58243"/>
        <dbReference type="ChEBI" id="CHEBI:58339"/>
        <dbReference type="ChEBI" id="CHEBI:456216"/>
        <dbReference type="EC" id="2.7.1.25"/>
    </reaction>
</comment>
<comment type="pathway">
    <text evidence="1">Sulfur metabolism; sulfate assimilation.</text>
</comment>
<comment type="subunit">
    <text evidence="1">Homodimer.</text>
</comment>
<comment type="similarity">
    <text evidence="3">In the N-terminal section; belongs to the APS kinase family.</text>
</comment>
<comment type="similarity">
    <text evidence="3">In the C-terminal section; belongs to the sulfate adenylyltransferase family.</text>
</comment>
<proteinExistence type="evidence at transcript level"/>
<dbReference type="EC" id="2.7.7.4" evidence="1"/>
<dbReference type="EC" id="2.7.1.25" evidence="1"/>
<dbReference type="EMBL" id="AF004875">
    <property type="protein sequence ID" value="AAC02266.1"/>
    <property type="molecule type" value="mRNA"/>
</dbReference>
<dbReference type="RefSeq" id="NP_001166466.1">
    <property type="nucleotide sequence ID" value="NM_001172995.1"/>
</dbReference>
<dbReference type="SMR" id="O54820"/>
<dbReference type="FunCoup" id="O54820">
    <property type="interactions" value="1523"/>
</dbReference>
<dbReference type="STRING" id="10141.ENSCPOP00000010347"/>
<dbReference type="GeneID" id="100135593"/>
<dbReference type="KEGG" id="cpoc:100135593"/>
<dbReference type="CTD" id="9061"/>
<dbReference type="eggNOG" id="KOG4238">
    <property type="taxonomic scope" value="Eukaryota"/>
</dbReference>
<dbReference type="InParanoid" id="O54820"/>
<dbReference type="OrthoDB" id="506431at2759"/>
<dbReference type="BRENDA" id="2.7.1.25">
    <property type="organism ID" value="1225"/>
</dbReference>
<dbReference type="UniPathway" id="UPA00097"/>
<dbReference type="Proteomes" id="UP000005447">
    <property type="component" value="Unassembled WGS sequence"/>
</dbReference>
<dbReference type="GO" id="GO:0004020">
    <property type="term" value="F:adenylylsulfate kinase activity"/>
    <property type="evidence" value="ECO:0000250"/>
    <property type="project" value="UniProtKB"/>
</dbReference>
<dbReference type="GO" id="GO:0005524">
    <property type="term" value="F:ATP binding"/>
    <property type="evidence" value="ECO:0007669"/>
    <property type="project" value="UniProtKB-KW"/>
</dbReference>
<dbReference type="GO" id="GO:0016779">
    <property type="term" value="F:nucleotidyltransferase activity"/>
    <property type="evidence" value="ECO:0000250"/>
    <property type="project" value="UniProtKB"/>
</dbReference>
<dbReference type="GO" id="GO:0004781">
    <property type="term" value="F:sulfate adenylyltransferase (ATP) activity"/>
    <property type="evidence" value="ECO:0000250"/>
    <property type="project" value="UniProtKB"/>
</dbReference>
<dbReference type="GO" id="GO:0050428">
    <property type="term" value="P:3'-phosphoadenosine 5'-phosphosulfate biosynthetic process"/>
    <property type="evidence" value="ECO:0000250"/>
    <property type="project" value="UniProtKB"/>
</dbReference>
<dbReference type="GO" id="GO:0000103">
    <property type="term" value="P:sulfate assimilation"/>
    <property type="evidence" value="ECO:0000250"/>
    <property type="project" value="UniProtKB"/>
</dbReference>
<dbReference type="CDD" id="cd02027">
    <property type="entry name" value="APSK"/>
    <property type="match status" value="1"/>
</dbReference>
<dbReference type="CDD" id="cd00517">
    <property type="entry name" value="ATPS"/>
    <property type="match status" value="1"/>
</dbReference>
<dbReference type="FunFam" id="3.40.50.300:FF:000212">
    <property type="entry name" value="Adenylyl-sulfate kinase"/>
    <property type="match status" value="1"/>
</dbReference>
<dbReference type="FunFam" id="3.10.400.10:FF:000001">
    <property type="entry name" value="bifunctional 3'-phosphoadenosine 5'-phosphosulfate synthase 1"/>
    <property type="match status" value="1"/>
</dbReference>
<dbReference type="FunFam" id="3.40.50.620:FF:000006">
    <property type="entry name" value="bifunctional 3'-phosphoadenosine 5'-phosphosulfate synthase 1"/>
    <property type="match status" value="1"/>
</dbReference>
<dbReference type="Gene3D" id="3.40.50.620">
    <property type="entry name" value="HUPs"/>
    <property type="match status" value="1"/>
</dbReference>
<dbReference type="Gene3D" id="3.40.50.300">
    <property type="entry name" value="P-loop containing nucleotide triphosphate hydrolases"/>
    <property type="match status" value="1"/>
</dbReference>
<dbReference type="Gene3D" id="3.10.400.10">
    <property type="entry name" value="Sulfate adenylyltransferase"/>
    <property type="match status" value="1"/>
</dbReference>
<dbReference type="HAMAP" id="MF_00065">
    <property type="entry name" value="Adenylyl_sulf_kinase"/>
    <property type="match status" value="1"/>
</dbReference>
<dbReference type="InterPro" id="IPR002891">
    <property type="entry name" value="APS_kinase"/>
</dbReference>
<dbReference type="InterPro" id="IPR025980">
    <property type="entry name" value="ATP-Sase_PUA-like_dom"/>
</dbReference>
<dbReference type="InterPro" id="IPR027417">
    <property type="entry name" value="P-loop_NTPase"/>
</dbReference>
<dbReference type="InterPro" id="IPR015947">
    <property type="entry name" value="PUA-like_sf"/>
</dbReference>
<dbReference type="InterPro" id="IPR014729">
    <property type="entry name" value="Rossmann-like_a/b/a_fold"/>
</dbReference>
<dbReference type="InterPro" id="IPR024951">
    <property type="entry name" value="Sulfurylase_cat_dom"/>
</dbReference>
<dbReference type="InterPro" id="IPR002650">
    <property type="entry name" value="Sulphate_adenylyltransferase"/>
</dbReference>
<dbReference type="NCBIfam" id="TIGR00455">
    <property type="entry name" value="apsK"/>
    <property type="match status" value="1"/>
</dbReference>
<dbReference type="NCBIfam" id="NF003013">
    <property type="entry name" value="PRK03846.1"/>
    <property type="match status" value="1"/>
</dbReference>
<dbReference type="NCBIfam" id="TIGR00339">
    <property type="entry name" value="sopT"/>
    <property type="match status" value="1"/>
</dbReference>
<dbReference type="PANTHER" id="PTHR11055">
    <property type="entry name" value="BIFUNCTIONAL 3'-PHOSPHOADENOSINE 5'-PHOSPHOSULFATE SYNTHASE"/>
    <property type="match status" value="1"/>
</dbReference>
<dbReference type="PANTHER" id="PTHR11055:SF17">
    <property type="entry name" value="BIFUNCTIONAL 3'-PHOSPHOADENOSINE 5'-PHOSPHOSULFATE SYNTHASE 1"/>
    <property type="match status" value="1"/>
</dbReference>
<dbReference type="Pfam" id="PF01583">
    <property type="entry name" value="APS_kinase"/>
    <property type="match status" value="1"/>
</dbReference>
<dbReference type="Pfam" id="PF01747">
    <property type="entry name" value="ATP-sulfurylase"/>
    <property type="match status" value="1"/>
</dbReference>
<dbReference type="Pfam" id="PF14306">
    <property type="entry name" value="PUA_2"/>
    <property type="match status" value="1"/>
</dbReference>
<dbReference type="SUPFAM" id="SSF52374">
    <property type="entry name" value="Nucleotidylyl transferase"/>
    <property type="match status" value="1"/>
</dbReference>
<dbReference type="SUPFAM" id="SSF52540">
    <property type="entry name" value="P-loop containing nucleoside triphosphate hydrolases"/>
    <property type="match status" value="1"/>
</dbReference>
<dbReference type="SUPFAM" id="SSF88697">
    <property type="entry name" value="PUA domain-like"/>
    <property type="match status" value="1"/>
</dbReference>
<sequence length="624" mass="70396">MELPGSLCKKAKLGHGAQSWGMQRATNVTYQAHHVSRNKRGQVVGTRGGFRGCTVWLTGLSGAGKTTVSMALGEHLVCHGIPCYTLDGDNIRQGLNKNLGFSPEDREENVRRIAEVAKLFADAGLVCITSFISPYTQDRNNARQIHEGASLPFFEVFVDAPLHVCEQRDVKGLYKKARAGEIKGFTGIDSEYEKPEAPELVLKTDACDVNDCVQQVVELLQERDIVPVDASYEVKELYVPENKLHLAKTDAESLPALQINKVDMQWVQVLAEGWATPLGGFMREREYLQCLHFDCLLDGGVINLSVPIVLTATEEDKERLDGCTAFALIYEGRRVAILRNPEFFEHRKEERCARQWGTTCKSHPYIKMVMEQGDWLIGGDLQVLDRIYWNDGLDQYRLTPTELKQKFKDMNADAVFAFQLRNPVHNGHALLMQDTHRQLLERGYRRPVLLLHPLGGWTKDDDVPLMWRMKQHAAVLEEGILNPESTVVAIFPSPMMYAGPTGVQWHCRARMVAGANFYIVGRDPAGMPHPETGKDLYKPTHGAKVLTMAPGLITLEIVPFRVAAYNKRKKRMDYYDAEHHEDFEFISGTRMRRLAREGQKPPEGFMAPTAWAVLAEYYKALEKA</sequence>
<feature type="chain" id="PRO_0000105958" description="Bifunctional 3'-phosphoadenosine 5'-phosphosulfate synthase 1">
    <location>
        <begin position="1"/>
        <end position="624"/>
    </location>
</feature>
<feature type="region of interest" description="Adenylyl-sulfate kinase" evidence="1">
    <location>
        <begin position="1"/>
        <end position="225"/>
    </location>
</feature>
<feature type="region of interest" description="Sulfate adenylyltransferase" evidence="1">
    <location>
        <begin position="234"/>
        <end position="624"/>
    </location>
</feature>
<feature type="binding site" evidence="1">
    <location>
        <begin position="62"/>
        <end position="67"/>
    </location>
    <ligand>
        <name>ATP</name>
        <dbReference type="ChEBI" id="CHEBI:30616"/>
        <label>1</label>
    </ligand>
</feature>
<feature type="binding site" evidence="1">
    <location>
        <begin position="89"/>
        <end position="92"/>
    </location>
    <ligand>
        <name>adenosine 5'-phosphosulfate</name>
        <dbReference type="ChEBI" id="CHEBI:58243"/>
    </ligand>
</feature>
<feature type="binding site" evidence="1">
    <location>
        <position position="101"/>
    </location>
    <ligand>
        <name>adenosine 5'-phosphosulfate</name>
        <dbReference type="ChEBI" id="CHEBI:58243"/>
    </ligand>
</feature>
<feature type="binding site" evidence="1">
    <location>
        <begin position="106"/>
        <end position="109"/>
    </location>
    <ligand>
        <name>adenosine 5'-phosphosulfate</name>
        <dbReference type="ChEBI" id="CHEBI:58243"/>
    </ligand>
</feature>
<feature type="binding site" evidence="1">
    <location>
        <begin position="132"/>
        <end position="133"/>
    </location>
    <ligand>
        <name>adenosine 5'-phosphosulfate</name>
        <dbReference type="ChEBI" id="CHEBI:58243"/>
    </ligand>
</feature>
<feature type="binding site" evidence="1">
    <location>
        <position position="171"/>
    </location>
    <ligand>
        <name>adenosine 5'-phosphosulfate</name>
        <dbReference type="ChEBI" id="CHEBI:58243"/>
    </ligand>
</feature>
<feature type="binding site" evidence="1">
    <location>
        <begin position="184"/>
        <end position="185"/>
    </location>
    <ligand>
        <name>adenosine 5'-phosphosulfate</name>
        <dbReference type="ChEBI" id="CHEBI:58243"/>
    </ligand>
</feature>
<feature type="binding site" evidence="1">
    <location>
        <position position="207"/>
    </location>
    <ligand>
        <name>ATP</name>
        <dbReference type="ChEBI" id="CHEBI:30616"/>
        <label>1</label>
    </ligand>
</feature>
<feature type="binding site" evidence="1">
    <location>
        <position position="212"/>
    </location>
    <ligand>
        <name>ATP</name>
        <dbReference type="ChEBI" id="CHEBI:30616"/>
        <label>1</label>
    </ligand>
</feature>
<feature type="binding site" evidence="1">
    <location>
        <begin position="419"/>
        <end position="422"/>
    </location>
    <ligand>
        <name>ATP</name>
        <dbReference type="ChEBI" id="CHEBI:30616"/>
        <label>2</label>
    </ligand>
</feature>
<feature type="binding site" evidence="1">
    <location>
        <begin position="521"/>
        <end position="525"/>
    </location>
    <ligand>
        <name>ATP</name>
        <dbReference type="ChEBI" id="CHEBI:30616"/>
        <label>2</label>
    </ligand>
</feature>
<feature type="binding site" evidence="1">
    <location>
        <position position="563"/>
    </location>
    <ligand>
        <name>ATP</name>
        <dbReference type="ChEBI" id="CHEBI:30616"/>
        <label>2</label>
    </ligand>
</feature>
<feature type="modified residue" description="N-acetylmethionine" evidence="1">
    <location>
        <position position="1"/>
    </location>
</feature>
<feature type="modified residue" description="N6-acetyllysine" evidence="2">
    <location>
        <position position="12"/>
    </location>
</feature>
<keyword id="KW-0007">Acetylation</keyword>
<keyword id="KW-0067">ATP-binding</keyword>
<keyword id="KW-0418">Kinase</keyword>
<keyword id="KW-0511">Multifunctional enzyme</keyword>
<keyword id="KW-0547">Nucleotide-binding</keyword>
<keyword id="KW-0548">Nucleotidyltransferase</keyword>
<keyword id="KW-1185">Reference proteome</keyword>
<keyword id="KW-0808">Transferase</keyword>
<reference key="1">
    <citation type="submission" date="1997-05" db="EMBL/GenBank/DDBJ databases">
        <authorList>
            <person name="Venkatachalam K.V."/>
            <person name="Akita H."/>
            <person name="Strott C.A."/>
        </authorList>
    </citation>
    <scope>NUCLEOTIDE SEQUENCE [MRNA]</scope>
    <source>
        <strain>NIH 2</strain>
    </source>
</reference>
<evidence type="ECO:0000250" key="1">
    <source>
        <dbReference type="UniProtKB" id="O43252"/>
    </source>
</evidence>
<evidence type="ECO:0000250" key="2">
    <source>
        <dbReference type="UniProtKB" id="Q60967"/>
    </source>
</evidence>
<evidence type="ECO:0000305" key="3"/>
<accession>O54820</accession>
<protein>
    <recommendedName>
        <fullName>Bifunctional 3'-phosphoadenosine 5'-phosphosulfate synthase 1</fullName>
        <shortName>PAPS synthase 1</shortName>
        <shortName>PAPSS 1</shortName>
    </recommendedName>
    <alternativeName>
        <fullName>Sulfurylase kinase 1</fullName>
        <shortName>SK 1</shortName>
        <shortName>SK1</shortName>
    </alternativeName>
    <domain>
        <recommendedName>
            <fullName>Sulfate adenylyltransferase</fullName>
            <ecNumber evidence="1">2.7.7.4</ecNumber>
        </recommendedName>
        <alternativeName>
            <fullName>ATP-sulfurylase</fullName>
        </alternativeName>
        <alternativeName>
            <fullName>Sulfate adenylate transferase</fullName>
            <shortName>SAT</shortName>
        </alternativeName>
    </domain>
    <domain>
        <recommendedName>
            <fullName>Adenylyl-sulfate kinase</fullName>
            <ecNumber evidence="1">2.7.1.25</ecNumber>
        </recommendedName>
        <alternativeName>
            <fullName>3'-phosphoadenosine-5'-phosphosulfate synthase</fullName>
        </alternativeName>
        <alternativeName>
            <fullName>APS kinase</fullName>
        </alternativeName>
        <alternativeName>
            <fullName>Adenosine-5'-phosphosulfate 3'-phosphotransferase</fullName>
        </alternativeName>
        <alternativeName>
            <fullName>Adenylylsulfate 3'-phosphotransferase</fullName>
        </alternativeName>
    </domain>
</protein>
<gene>
    <name type="primary">PAPSS1</name>
    <name type="synonym">ATPSK1</name>
    <name type="synonym">PAPSS</name>
</gene>
<name>PAPS1_CAVPO</name>
<organism>
    <name type="scientific">Cavia porcellus</name>
    <name type="common">Guinea pig</name>
    <dbReference type="NCBI Taxonomy" id="10141"/>
    <lineage>
        <taxon>Eukaryota</taxon>
        <taxon>Metazoa</taxon>
        <taxon>Chordata</taxon>
        <taxon>Craniata</taxon>
        <taxon>Vertebrata</taxon>
        <taxon>Euteleostomi</taxon>
        <taxon>Mammalia</taxon>
        <taxon>Eutheria</taxon>
        <taxon>Euarchontoglires</taxon>
        <taxon>Glires</taxon>
        <taxon>Rodentia</taxon>
        <taxon>Hystricomorpha</taxon>
        <taxon>Caviidae</taxon>
        <taxon>Cavia</taxon>
    </lineage>
</organism>